<proteinExistence type="inferred from homology"/>
<accession>Q73H94</accession>
<feature type="chain" id="PRO_0000130497" description="Large ribosomal subunit protein uL29">
    <location>
        <begin position="1"/>
        <end position="67"/>
    </location>
</feature>
<reference key="1">
    <citation type="journal article" date="2004" name="PLoS Biol.">
        <title>Phylogenomics of the reproductive parasite Wolbachia pipientis wMel: a streamlined genome overrun by mobile genetic elements.</title>
        <authorList>
            <person name="Wu M."/>
            <person name="Sun L.V."/>
            <person name="Vamathevan J.J."/>
            <person name="Riegler M."/>
            <person name="DeBoy R.T."/>
            <person name="Brownlie J.C."/>
            <person name="McGraw E.A."/>
            <person name="Martin W."/>
            <person name="Esser C."/>
            <person name="Ahmadinejad N."/>
            <person name="Wiegand C."/>
            <person name="Madupu R."/>
            <person name="Beanan M.J."/>
            <person name="Brinkac L.M."/>
            <person name="Daugherty S.C."/>
            <person name="Durkin A.S."/>
            <person name="Kolonay J.F."/>
            <person name="Nelson W.C."/>
            <person name="Mohamoud Y."/>
            <person name="Lee P."/>
            <person name="Berry K.J."/>
            <person name="Young M.B."/>
            <person name="Utterback T.R."/>
            <person name="Weidman J.F."/>
            <person name="Nierman W.C."/>
            <person name="Paulsen I.T."/>
            <person name="Nelson K.E."/>
            <person name="Tettelin H."/>
            <person name="O'Neill S.L."/>
            <person name="Eisen J.A."/>
        </authorList>
    </citation>
    <scope>NUCLEOTIDE SEQUENCE [LARGE SCALE GENOMIC DNA]</scope>
</reference>
<gene>
    <name evidence="1" type="primary">rpmC</name>
    <name type="ordered locus">WD_0673</name>
</gene>
<dbReference type="EMBL" id="AE017196">
    <property type="protein sequence ID" value="AAS14371.1"/>
    <property type="molecule type" value="Genomic_DNA"/>
</dbReference>
<dbReference type="RefSeq" id="WP_010962751.1">
    <property type="nucleotide sequence ID" value="NZ_OX384529.1"/>
</dbReference>
<dbReference type="SMR" id="Q73H94"/>
<dbReference type="EnsemblBacteria" id="AAS14371">
    <property type="protein sequence ID" value="AAS14371"/>
    <property type="gene ID" value="WD_0673"/>
</dbReference>
<dbReference type="GeneID" id="70036156"/>
<dbReference type="KEGG" id="wol:WD_0673"/>
<dbReference type="eggNOG" id="COG0255">
    <property type="taxonomic scope" value="Bacteria"/>
</dbReference>
<dbReference type="Proteomes" id="UP000008215">
    <property type="component" value="Chromosome"/>
</dbReference>
<dbReference type="GO" id="GO:1990904">
    <property type="term" value="C:ribonucleoprotein complex"/>
    <property type="evidence" value="ECO:0007669"/>
    <property type="project" value="UniProtKB-KW"/>
</dbReference>
<dbReference type="GO" id="GO:0005840">
    <property type="term" value="C:ribosome"/>
    <property type="evidence" value="ECO:0007669"/>
    <property type="project" value="UniProtKB-KW"/>
</dbReference>
<dbReference type="GO" id="GO:0003735">
    <property type="term" value="F:structural constituent of ribosome"/>
    <property type="evidence" value="ECO:0007669"/>
    <property type="project" value="InterPro"/>
</dbReference>
<dbReference type="GO" id="GO:0006412">
    <property type="term" value="P:translation"/>
    <property type="evidence" value="ECO:0007669"/>
    <property type="project" value="UniProtKB-UniRule"/>
</dbReference>
<dbReference type="CDD" id="cd00427">
    <property type="entry name" value="Ribosomal_L29_HIP"/>
    <property type="match status" value="1"/>
</dbReference>
<dbReference type="Gene3D" id="1.10.287.310">
    <property type="match status" value="1"/>
</dbReference>
<dbReference type="HAMAP" id="MF_00374">
    <property type="entry name" value="Ribosomal_uL29"/>
    <property type="match status" value="1"/>
</dbReference>
<dbReference type="InterPro" id="IPR001854">
    <property type="entry name" value="Ribosomal_uL29"/>
</dbReference>
<dbReference type="InterPro" id="IPR036049">
    <property type="entry name" value="Ribosomal_uL29_sf"/>
</dbReference>
<dbReference type="NCBIfam" id="TIGR00012">
    <property type="entry name" value="L29"/>
    <property type="match status" value="1"/>
</dbReference>
<dbReference type="Pfam" id="PF00831">
    <property type="entry name" value="Ribosomal_L29"/>
    <property type="match status" value="1"/>
</dbReference>
<dbReference type="SUPFAM" id="SSF46561">
    <property type="entry name" value="Ribosomal protein L29 (L29p)"/>
    <property type="match status" value="1"/>
</dbReference>
<sequence>MDIADIESRSSQELHEILVNLRKEFVNLVFQKKLAQCNNISRFSLIRKSIARILTTLNKRRREEKNA</sequence>
<comment type="similarity">
    <text evidence="1">Belongs to the universal ribosomal protein uL29 family.</text>
</comment>
<protein>
    <recommendedName>
        <fullName evidence="1">Large ribosomal subunit protein uL29</fullName>
    </recommendedName>
    <alternativeName>
        <fullName evidence="2">50S ribosomal protein L29</fullName>
    </alternativeName>
</protein>
<organism>
    <name type="scientific">Wolbachia pipientis wMel</name>
    <dbReference type="NCBI Taxonomy" id="163164"/>
    <lineage>
        <taxon>Bacteria</taxon>
        <taxon>Pseudomonadati</taxon>
        <taxon>Pseudomonadota</taxon>
        <taxon>Alphaproteobacteria</taxon>
        <taxon>Rickettsiales</taxon>
        <taxon>Anaplasmataceae</taxon>
        <taxon>Wolbachieae</taxon>
        <taxon>Wolbachia</taxon>
    </lineage>
</organism>
<keyword id="KW-0687">Ribonucleoprotein</keyword>
<keyword id="KW-0689">Ribosomal protein</keyword>
<evidence type="ECO:0000255" key="1">
    <source>
        <dbReference type="HAMAP-Rule" id="MF_00374"/>
    </source>
</evidence>
<evidence type="ECO:0000305" key="2"/>
<name>RL29_WOLPM</name>